<sequence>MILFPAIDLKDGQCVRLKLGDMDQATVYNEDPAAQAKAFEDQGFEWLHVVDLNGAFAGESVNGKAVEAILKATKNPVQLGGGIRTLQHIENWLSKGLRRVILGTVAVRDPALVIEACKAFPGQVAVGIDAKGGYVAVEGWAEASELGVIELAKKFEGAGVAAIIYTDIDRDGVLAGINWDSTLGLADSVSIPVIASGGLASMDDIKRLAAPDARKLEGAISGRALYDGRIDPAEALSLLRAAA</sequence>
<protein>
    <recommendedName>
        <fullName evidence="1">1-(5-phosphoribosyl)-5-[(5-phosphoribosylamino)methylideneamino] imidazole-4-carboxamide isomerase</fullName>
        <ecNumber evidence="1">5.3.1.16</ecNumber>
    </recommendedName>
    <alternativeName>
        <fullName evidence="1">Phosphoribosylformimino-5-aminoimidazole carboxamide ribotide isomerase</fullName>
    </alternativeName>
</protein>
<keyword id="KW-0028">Amino-acid biosynthesis</keyword>
<keyword id="KW-0963">Cytoplasm</keyword>
<keyword id="KW-0368">Histidine biosynthesis</keyword>
<keyword id="KW-0413">Isomerase</keyword>
<keyword id="KW-1185">Reference proteome</keyword>
<comment type="catalytic activity">
    <reaction evidence="1">
        <text>1-(5-phospho-beta-D-ribosyl)-5-[(5-phospho-beta-D-ribosylamino)methylideneamino]imidazole-4-carboxamide = 5-[(5-phospho-1-deoxy-D-ribulos-1-ylimino)methylamino]-1-(5-phospho-beta-D-ribosyl)imidazole-4-carboxamide</text>
        <dbReference type="Rhea" id="RHEA:15469"/>
        <dbReference type="ChEBI" id="CHEBI:58435"/>
        <dbReference type="ChEBI" id="CHEBI:58525"/>
        <dbReference type="EC" id="5.3.1.16"/>
    </reaction>
</comment>
<comment type="pathway">
    <text evidence="1">Amino-acid biosynthesis; L-histidine biosynthesis; L-histidine from 5-phospho-alpha-D-ribose 1-diphosphate: step 4/9.</text>
</comment>
<comment type="subcellular location">
    <subcellularLocation>
        <location evidence="1">Cytoplasm</location>
    </subcellularLocation>
</comment>
<comment type="similarity">
    <text evidence="1">Belongs to the HisA/HisF family.</text>
</comment>
<organism>
    <name type="scientific">Brucella anthropi (strain ATCC 49188 / DSM 6882 / CCUG 24695 / JCM 21032 / LMG 3331 / NBRC 15819 / NCTC 12168 / Alc 37)</name>
    <name type="common">Ochrobactrum anthropi</name>
    <dbReference type="NCBI Taxonomy" id="439375"/>
    <lineage>
        <taxon>Bacteria</taxon>
        <taxon>Pseudomonadati</taxon>
        <taxon>Pseudomonadota</taxon>
        <taxon>Alphaproteobacteria</taxon>
        <taxon>Hyphomicrobiales</taxon>
        <taxon>Brucellaceae</taxon>
        <taxon>Brucella/Ochrobactrum group</taxon>
        <taxon>Brucella</taxon>
    </lineage>
</organism>
<reference key="1">
    <citation type="journal article" date="2011" name="J. Bacteriol.">
        <title>Genome of Ochrobactrum anthropi ATCC 49188 T, a versatile opportunistic pathogen and symbiont of several eukaryotic hosts.</title>
        <authorList>
            <person name="Chain P.S."/>
            <person name="Lang D.M."/>
            <person name="Comerci D.J."/>
            <person name="Malfatti S.A."/>
            <person name="Vergez L.M."/>
            <person name="Shin M."/>
            <person name="Ugalde R.A."/>
            <person name="Garcia E."/>
            <person name="Tolmasky M.E."/>
        </authorList>
    </citation>
    <scope>NUCLEOTIDE SEQUENCE [LARGE SCALE GENOMIC DNA]</scope>
    <source>
        <strain>ATCC 49188 / DSM 6882 / CCUG 24695 / JCM 21032 / LMG 3331 / NBRC 15819 / NCTC 12168 / Alc 37</strain>
    </source>
</reference>
<proteinExistence type="inferred from homology"/>
<feature type="chain" id="PRO_1000063223" description="1-(5-phosphoribosyl)-5-[(5-phosphoribosylamino)methylideneamino] imidazole-4-carboxamide isomerase">
    <location>
        <begin position="1"/>
        <end position="243"/>
    </location>
</feature>
<feature type="active site" description="Proton acceptor" evidence="1">
    <location>
        <position position="8"/>
    </location>
</feature>
<feature type="active site" description="Proton donor" evidence="1">
    <location>
        <position position="129"/>
    </location>
</feature>
<gene>
    <name evidence="1" type="primary">hisA</name>
    <name type="ordered locus">Oant_0835</name>
</gene>
<name>HIS4_BRUA4</name>
<dbReference type="EC" id="5.3.1.16" evidence="1"/>
<dbReference type="EMBL" id="CP000758">
    <property type="protein sequence ID" value="ABS13557.1"/>
    <property type="molecule type" value="Genomic_DNA"/>
</dbReference>
<dbReference type="RefSeq" id="WP_012091058.1">
    <property type="nucleotide sequence ID" value="NC_009667.1"/>
</dbReference>
<dbReference type="SMR" id="A6WX53"/>
<dbReference type="STRING" id="439375.Oant_0835"/>
<dbReference type="KEGG" id="oan:Oant_0835"/>
<dbReference type="PATRIC" id="fig|439375.7.peg.880"/>
<dbReference type="eggNOG" id="COG0106">
    <property type="taxonomic scope" value="Bacteria"/>
</dbReference>
<dbReference type="HOGENOM" id="CLU_048577_1_1_5"/>
<dbReference type="PhylomeDB" id="A6WX53"/>
<dbReference type="UniPathway" id="UPA00031">
    <property type="reaction ID" value="UER00009"/>
</dbReference>
<dbReference type="Proteomes" id="UP000002301">
    <property type="component" value="Chromosome 1"/>
</dbReference>
<dbReference type="GO" id="GO:0005737">
    <property type="term" value="C:cytoplasm"/>
    <property type="evidence" value="ECO:0007669"/>
    <property type="project" value="UniProtKB-SubCell"/>
</dbReference>
<dbReference type="GO" id="GO:0003949">
    <property type="term" value="F:1-(5-phosphoribosyl)-5-[(5-phosphoribosylamino)methylideneamino]imidazole-4-carboxamide isomerase activity"/>
    <property type="evidence" value="ECO:0007669"/>
    <property type="project" value="UniProtKB-UniRule"/>
</dbReference>
<dbReference type="GO" id="GO:0000105">
    <property type="term" value="P:L-histidine biosynthetic process"/>
    <property type="evidence" value="ECO:0007669"/>
    <property type="project" value="UniProtKB-UniRule"/>
</dbReference>
<dbReference type="GO" id="GO:0000162">
    <property type="term" value="P:L-tryptophan biosynthetic process"/>
    <property type="evidence" value="ECO:0007669"/>
    <property type="project" value="TreeGrafter"/>
</dbReference>
<dbReference type="CDD" id="cd04732">
    <property type="entry name" value="HisA"/>
    <property type="match status" value="1"/>
</dbReference>
<dbReference type="FunFam" id="3.20.20.70:FF:000009">
    <property type="entry name" value="1-(5-phosphoribosyl)-5-[(5-phosphoribosylamino)methylideneamino] imidazole-4-carboxamide isomerase"/>
    <property type="match status" value="1"/>
</dbReference>
<dbReference type="Gene3D" id="3.20.20.70">
    <property type="entry name" value="Aldolase class I"/>
    <property type="match status" value="1"/>
</dbReference>
<dbReference type="HAMAP" id="MF_01014">
    <property type="entry name" value="HisA"/>
    <property type="match status" value="1"/>
</dbReference>
<dbReference type="InterPro" id="IPR013785">
    <property type="entry name" value="Aldolase_TIM"/>
</dbReference>
<dbReference type="InterPro" id="IPR006062">
    <property type="entry name" value="His_biosynth"/>
</dbReference>
<dbReference type="InterPro" id="IPR006063">
    <property type="entry name" value="HisA_bact_arch"/>
</dbReference>
<dbReference type="InterPro" id="IPR044524">
    <property type="entry name" value="Isoase_HisA-like"/>
</dbReference>
<dbReference type="InterPro" id="IPR023016">
    <property type="entry name" value="Isoase_HisA-like_bact"/>
</dbReference>
<dbReference type="InterPro" id="IPR011060">
    <property type="entry name" value="RibuloseP-bd_barrel"/>
</dbReference>
<dbReference type="NCBIfam" id="TIGR00007">
    <property type="entry name" value="1-(5-phosphoribosyl)-5-[(5-phosphoribosylamino)methylideneamino]imidazole-4-carboxamide isomerase"/>
    <property type="match status" value="1"/>
</dbReference>
<dbReference type="PANTHER" id="PTHR43090">
    <property type="entry name" value="1-(5-PHOSPHORIBOSYL)-5-[(5-PHOSPHORIBOSYLAMINO)METHYLIDENEAMINO] IMIDAZOLE-4-CARBOXAMIDE ISOMERASE"/>
    <property type="match status" value="1"/>
</dbReference>
<dbReference type="PANTHER" id="PTHR43090:SF2">
    <property type="entry name" value="1-(5-PHOSPHORIBOSYL)-5-[(5-PHOSPHORIBOSYLAMINO)METHYLIDENEAMINO] IMIDAZOLE-4-CARBOXAMIDE ISOMERASE"/>
    <property type="match status" value="1"/>
</dbReference>
<dbReference type="Pfam" id="PF00977">
    <property type="entry name" value="His_biosynth"/>
    <property type="match status" value="1"/>
</dbReference>
<dbReference type="SUPFAM" id="SSF51366">
    <property type="entry name" value="Ribulose-phoshate binding barrel"/>
    <property type="match status" value="1"/>
</dbReference>
<accession>A6WX53</accession>
<evidence type="ECO:0000255" key="1">
    <source>
        <dbReference type="HAMAP-Rule" id="MF_01014"/>
    </source>
</evidence>